<dbReference type="EC" id="3.1.-.-" evidence="1"/>
<dbReference type="EMBL" id="X04370">
    <property type="protein sequence ID" value="CAB55553.1"/>
    <property type="molecule type" value="Genomic_DNA"/>
</dbReference>
<dbReference type="PIR" id="A27344">
    <property type="entry name" value="WZBE45"/>
</dbReference>
<dbReference type="PIR" id="G27341">
    <property type="entry name" value="G27341"/>
</dbReference>
<dbReference type="SMR" id="P09294"/>
<dbReference type="Proteomes" id="UP000002602">
    <property type="component" value="Genome"/>
</dbReference>
<dbReference type="GO" id="GO:0042025">
    <property type="term" value="C:host cell nucleus"/>
    <property type="evidence" value="ECO:0007669"/>
    <property type="project" value="UniProtKB-SubCell"/>
</dbReference>
<dbReference type="GO" id="GO:0003677">
    <property type="term" value="F:DNA binding"/>
    <property type="evidence" value="ECO:0007669"/>
    <property type="project" value="UniProtKB-KW"/>
</dbReference>
<dbReference type="GO" id="GO:0016787">
    <property type="term" value="F:hydrolase activity"/>
    <property type="evidence" value="ECO:0007669"/>
    <property type="project" value="UniProtKB-KW"/>
</dbReference>
<dbReference type="GO" id="GO:0051276">
    <property type="term" value="P:chromosome organization"/>
    <property type="evidence" value="ECO:0007669"/>
    <property type="project" value="InterPro"/>
</dbReference>
<dbReference type="Gene3D" id="3.30.420.320">
    <property type="match status" value="1"/>
</dbReference>
<dbReference type="Gene3D" id="3.40.50.300">
    <property type="entry name" value="P-loop containing nucleotide triphosphate hydrolases"/>
    <property type="match status" value="1"/>
</dbReference>
<dbReference type="HAMAP" id="MF_04013">
    <property type="entry name" value="HSV_TRM3"/>
    <property type="match status" value="1"/>
</dbReference>
<dbReference type="InterPro" id="IPR003498">
    <property type="entry name" value="DNA_pack_C"/>
</dbReference>
<dbReference type="InterPro" id="IPR038435">
    <property type="entry name" value="DNA_pack_C_sf"/>
</dbReference>
<dbReference type="InterPro" id="IPR003499">
    <property type="entry name" value="DNA_pack_N"/>
</dbReference>
<dbReference type="InterPro" id="IPR033663">
    <property type="entry name" value="HSV_TRM3"/>
</dbReference>
<dbReference type="InterPro" id="IPR027417">
    <property type="entry name" value="P-loop_NTPase"/>
</dbReference>
<dbReference type="Pfam" id="PF02499">
    <property type="entry name" value="DNA_pack_C"/>
    <property type="match status" value="1"/>
</dbReference>
<dbReference type="Pfam" id="PF02500">
    <property type="entry name" value="DNA_pack_N"/>
    <property type="match status" value="1"/>
</dbReference>
<dbReference type="SUPFAM" id="SSF52540">
    <property type="entry name" value="P-loop containing nucleoside triphosphate hydrolases"/>
    <property type="match status" value="1"/>
</dbReference>
<name>TRM3_VZVD</name>
<organismHost>
    <name type="scientific">Homo sapiens</name>
    <name type="common">Human</name>
    <dbReference type="NCBI Taxonomy" id="9606"/>
</organismHost>
<comment type="function">
    <text evidence="1">Component of the molecular motor that translocates viral genomic DNA in empty capsid during DNA packaging. Forms a tripartite terminase complex together with TRM1 and TRM2 in the host cytoplasm. Once the complex reaches the host nucleus, it interacts with the capsid portal vertex. This portal forms a ring in which genomic DNA is translocated into the capsid. TRM3 carries an RNase H-like nuclease activity that plays an important role for the cleavage of concatemeric viral DNA into unit length genomes.</text>
</comment>
<comment type="subunit">
    <text evidence="1">Interacts with the terminase subunits TRM1 and TRM2. Interacts with portal protein.</text>
</comment>
<comment type="subcellular location">
    <subcellularLocation>
        <location evidence="1">Host nucleus</location>
    </subcellularLocation>
    <text evidence="1">Responsible for the nuclear localization of the two others subunits TRM1 and TRM2.</text>
</comment>
<comment type="similarity">
    <text evidence="1">Belongs to the herpesviridae TRM3 protein family.</text>
</comment>
<proteinExistence type="inferred from homology"/>
<gene>
    <name evidence="1" type="primary">TRM3</name>
    <name type="ordered locus">45/42</name>
</gene>
<keyword id="KW-0238">DNA-binding</keyword>
<keyword id="KW-1048">Host nucleus</keyword>
<keyword id="KW-0378">Hydrolase</keyword>
<keyword id="KW-1185">Reference proteome</keyword>
<keyword id="KW-0231">Viral genome packaging</keyword>
<keyword id="KW-1188">Viral release from host cell</keyword>
<organism>
    <name type="scientific">Varicella-zoster virus (strain Dumas)</name>
    <name type="common">HHV-3</name>
    <name type="synonym">Human herpesvirus 3</name>
    <dbReference type="NCBI Taxonomy" id="10338"/>
    <lineage>
        <taxon>Viruses</taxon>
        <taxon>Duplodnaviria</taxon>
        <taxon>Heunggongvirae</taxon>
        <taxon>Peploviricota</taxon>
        <taxon>Herviviricetes</taxon>
        <taxon>Herpesvirales</taxon>
        <taxon>Orthoherpesviridae</taxon>
        <taxon>Alphaherpesvirinae</taxon>
        <taxon>Varicellovirus</taxon>
        <taxon>Varicellovirus humanalpha3</taxon>
        <taxon>Human herpesvirus 3</taxon>
    </lineage>
</organism>
<accession>P09294</accession>
<evidence type="ECO:0000255" key="1">
    <source>
        <dbReference type="HAMAP-Rule" id="MF_04013"/>
    </source>
</evidence>
<reference key="1">
    <citation type="journal article" date="1986" name="J. Gen. Virol.">
        <title>The complete DNA sequence of varicella-zoster virus.</title>
        <authorList>
            <person name="Davison A.J."/>
            <person name="Scott J.E."/>
        </authorList>
    </citation>
    <scope>NUCLEOTIDE SEQUENCE [LARGE SCALE GENOMIC DNA]</scope>
</reference>
<sequence length="747" mass="82757">MSLIMFGRTLGEESVRYFERLKRRRDERFGTLESPTPCSTRQGSLGNATQIPFLNFAIDVTRRHQAVIPGIGTLHNCCEYIPLFSATARRAMFGAFLSSTGYNCTPNVVLKPWRYSVNANVSPELKKAVSSVQFYEYSPEEAAPHRNAYSGVMNTFRAFSLSDSFCQLSTFTQRFSYLVETSFESIEECGSHGKRAKVDVPIYGRYKGTLELFQKMILMHTTHFISSVLLGDHADRVDCFLRTVFNTPSVSDSVLEHFKQKSTVFLVPRRHGKTWFLVPLIALVMATFRGIKVGYTAHIRKATEPVFEGIKSRLEQWFGANYVDHVKGESITFSFTDGSYSTAVFASSHNTNGIRGQDFNLLFVDEANFIRPDAVQTIVGFLNQTNCKIIFVSSTNTGKASTSFLYNLRGSSDQLLNVVTYVCDDHMPRVLAHSDVTACSCYVLNKPVFITMDGAMRRTADLFMADSFVQEIVGGRKQNSGGVGFDRPLFTKTARERFILYRPSTVANCAILSSVLYVYVDPAFTSNTRASGTGVAIVGRYKSDWIIFGLEHFFLRALTGTSSSEIGRCVTQCLGHILALHPNTFTNVHVSIEGNSSQDSAVAISLAIAQQFAVLEKGNVLSSAPVLLFYHSIPPGCSVAYPFFLLQKQKTPAVDYFVKRFNSGNIIASQELVSLTVKLGVDPVEYLCKQLDNLTEVIKGGMGNLDTKTYTGKGTTGTMSDDLMVALIMSVYIGSSCIPDSVFMPIK</sequence>
<protein>
    <recommendedName>
        <fullName evidence="1">Tripartite terminase subunit 3</fullName>
        <ecNumber evidence="1">3.1.-.-</ecNumber>
    </recommendedName>
    <alternativeName>
        <fullName evidence="1">Terminase large subunit</fullName>
    </alternativeName>
    <component>
        <recommendedName>
            <fullName>Gene 42 protein</fullName>
        </recommendedName>
    </component>
</protein>
<feature type="chain" id="PRO_0000038308" description="Tripartite terminase subunit 3">
    <location>
        <begin position="1"/>
        <end position="747"/>
    </location>
</feature>
<feature type="chain" id="PRO_0000038309" description="Gene 42 protein">
    <location>
        <begin position="353"/>
        <end position="747"/>
    </location>
</feature>
<feature type="short sequence motif" description="Nuclear localization signal" evidence="1">
    <location>
        <begin position="194"/>
        <end position="198"/>
    </location>
</feature>
<feature type="short sequence motif" description="Walker A motif" evidence="1">
    <location>
        <begin position="267"/>
        <end position="274"/>
    </location>
</feature>
<feature type="short sequence motif" description="Walker B motif" evidence="1">
    <location>
        <begin position="361"/>
        <end position="366"/>
    </location>
</feature>
<feature type="active site" description="For ATPase activity" evidence="1">
    <location>
        <position position="366"/>
    </location>
</feature>
<feature type="active site" description="For nuclease activity" evidence="1">
    <location>
        <position position="521"/>
    </location>
</feature>
<feature type="active site" description="For nuclease activity" evidence="1">
    <location>
        <position position="593"/>
    </location>
</feature>
<feature type="active site" description="For nuclease activity" evidence="1">
    <location>
        <position position="722"/>
    </location>
</feature>